<dbReference type="EC" id="2.1.1.195" evidence="1"/>
<dbReference type="EMBL" id="CP000075">
    <property type="protein sequence ID" value="AAY39449.1"/>
    <property type="molecule type" value="Genomic_DNA"/>
</dbReference>
<dbReference type="RefSeq" id="WP_011269018.1">
    <property type="nucleotide sequence ID" value="NC_007005.1"/>
</dbReference>
<dbReference type="RefSeq" id="YP_237487.1">
    <property type="nucleotide sequence ID" value="NC_007005.1"/>
</dbReference>
<dbReference type="SMR" id="Q4ZN23"/>
<dbReference type="STRING" id="205918.Psyr_4419"/>
<dbReference type="KEGG" id="psb:Psyr_4419"/>
<dbReference type="PATRIC" id="fig|205918.7.peg.4561"/>
<dbReference type="eggNOG" id="COG1903">
    <property type="taxonomic scope" value="Bacteria"/>
</dbReference>
<dbReference type="HOGENOM" id="CLU_041273_0_0_6"/>
<dbReference type="OrthoDB" id="6439987at2"/>
<dbReference type="UniPathway" id="UPA00148">
    <property type="reaction ID" value="UER00227"/>
</dbReference>
<dbReference type="Proteomes" id="UP000000426">
    <property type="component" value="Chromosome"/>
</dbReference>
<dbReference type="GO" id="GO:0043780">
    <property type="term" value="F:cobalt-precorrin-5B C1-methyltransferase activity"/>
    <property type="evidence" value="ECO:0007669"/>
    <property type="project" value="RHEA"/>
</dbReference>
<dbReference type="GO" id="GO:0019251">
    <property type="term" value="P:anaerobic cobalamin biosynthetic process"/>
    <property type="evidence" value="ECO:0007669"/>
    <property type="project" value="UniProtKB-UniRule"/>
</dbReference>
<dbReference type="GO" id="GO:0032259">
    <property type="term" value="P:methylation"/>
    <property type="evidence" value="ECO:0007669"/>
    <property type="project" value="UniProtKB-KW"/>
</dbReference>
<dbReference type="Gene3D" id="3.30.2110.10">
    <property type="entry name" value="CbiD-like"/>
    <property type="match status" value="1"/>
</dbReference>
<dbReference type="HAMAP" id="MF_00787">
    <property type="entry name" value="CbiD"/>
    <property type="match status" value="1"/>
</dbReference>
<dbReference type="InterPro" id="IPR002748">
    <property type="entry name" value="CbiD"/>
</dbReference>
<dbReference type="InterPro" id="IPR036074">
    <property type="entry name" value="CbiD_sf"/>
</dbReference>
<dbReference type="NCBIfam" id="TIGR00312">
    <property type="entry name" value="cbiD"/>
    <property type="match status" value="1"/>
</dbReference>
<dbReference type="NCBIfam" id="NF000849">
    <property type="entry name" value="PRK00075.1-1"/>
    <property type="match status" value="1"/>
</dbReference>
<dbReference type="PANTHER" id="PTHR35863">
    <property type="entry name" value="COBALT-PRECORRIN-5B C(1)-METHYLTRANSFERASE"/>
    <property type="match status" value="1"/>
</dbReference>
<dbReference type="PANTHER" id="PTHR35863:SF1">
    <property type="entry name" value="COBALT-PRECORRIN-5B C(1)-METHYLTRANSFERASE"/>
    <property type="match status" value="1"/>
</dbReference>
<dbReference type="Pfam" id="PF01888">
    <property type="entry name" value="CbiD"/>
    <property type="match status" value="1"/>
</dbReference>
<dbReference type="PIRSF" id="PIRSF026782">
    <property type="entry name" value="CbiD"/>
    <property type="match status" value="1"/>
</dbReference>
<dbReference type="SUPFAM" id="SSF111342">
    <property type="entry name" value="CbiD-like"/>
    <property type="match status" value="1"/>
</dbReference>
<accession>Q4ZN23</accession>
<reference key="1">
    <citation type="journal article" date="2005" name="Proc. Natl. Acad. Sci. U.S.A.">
        <title>Comparison of the complete genome sequences of Pseudomonas syringae pv. syringae B728a and pv. tomato DC3000.</title>
        <authorList>
            <person name="Feil H."/>
            <person name="Feil W.S."/>
            <person name="Chain P."/>
            <person name="Larimer F."/>
            <person name="Dibartolo G."/>
            <person name="Copeland A."/>
            <person name="Lykidis A."/>
            <person name="Trong S."/>
            <person name="Nolan M."/>
            <person name="Goltsman E."/>
            <person name="Thiel J."/>
            <person name="Malfatti S."/>
            <person name="Loper J.E."/>
            <person name="Lapidus A."/>
            <person name="Detter J.C."/>
            <person name="Land M."/>
            <person name="Richardson P.M."/>
            <person name="Kyrpides N.C."/>
            <person name="Ivanova N."/>
            <person name="Lindow S.E."/>
        </authorList>
    </citation>
    <scope>NUCLEOTIDE SEQUENCE [LARGE SCALE GENOMIC DNA]</scope>
    <source>
        <strain>B728a</strain>
    </source>
</reference>
<feature type="chain" id="PRO_0000257775" description="Cobalt-precorrin-5B C(1)-methyltransferase">
    <location>
        <begin position="1"/>
        <end position="370"/>
    </location>
</feature>
<gene>
    <name evidence="1" type="primary">cbiD</name>
    <name type="ordered locus">Psyr_4419</name>
</gene>
<evidence type="ECO:0000255" key="1">
    <source>
        <dbReference type="HAMAP-Rule" id="MF_00787"/>
    </source>
</evidence>
<protein>
    <recommendedName>
        <fullName evidence="1">Cobalt-precorrin-5B C(1)-methyltransferase</fullName>
        <ecNumber evidence="1">2.1.1.195</ecNumber>
    </recommendedName>
    <alternativeName>
        <fullName evidence="1">Cobalt-precorrin-6A synthase</fullName>
    </alternativeName>
</protein>
<sequence length="370" mass="38677">MREETAEQPAPLRSGLTTGSCATATSLAAARLLLCGQVSDAVEIVLPKGKQVQMRLEFCRLVDNFAEAATLKDAGDDPDVTHGALVFARVRLQAAAGVRFLAGAGVGTVTRPGLVLAVGEPAINPVPRRMMTEHLLQLAEEQGYSGGFEVTIGVEGGEALALKTMNPRLGILGGLSILGTSGIVRPFSCAAYIASIHQGIDVATTNGYRHIAACTGNASEDTMRRVYKIPDIALIEMGDFVGAVLKHLRRVSVDKLSVCGGFGKISKLAAGHMDLHSRHSSIDLPQLARWAADVGADAGLQQQILAANTSQQALAMSAAAGVPLGDEVCRHALNFARSIVPASVQVEVFAIDRQGGLVGQAGVDSQREIT</sequence>
<proteinExistence type="inferred from homology"/>
<keyword id="KW-0169">Cobalamin biosynthesis</keyword>
<keyword id="KW-0489">Methyltransferase</keyword>
<keyword id="KW-0949">S-adenosyl-L-methionine</keyword>
<keyword id="KW-0808">Transferase</keyword>
<organism>
    <name type="scientific">Pseudomonas syringae pv. syringae (strain B728a)</name>
    <dbReference type="NCBI Taxonomy" id="205918"/>
    <lineage>
        <taxon>Bacteria</taxon>
        <taxon>Pseudomonadati</taxon>
        <taxon>Pseudomonadota</taxon>
        <taxon>Gammaproteobacteria</taxon>
        <taxon>Pseudomonadales</taxon>
        <taxon>Pseudomonadaceae</taxon>
        <taxon>Pseudomonas</taxon>
        <taxon>Pseudomonas syringae</taxon>
    </lineage>
</organism>
<comment type="function">
    <text evidence="1">Catalyzes the methylation of C-1 in cobalt-precorrin-5B to form cobalt-precorrin-6A.</text>
</comment>
<comment type="catalytic activity">
    <reaction evidence="1">
        <text>Co-precorrin-5B + S-adenosyl-L-methionine = Co-precorrin-6A + S-adenosyl-L-homocysteine</text>
        <dbReference type="Rhea" id="RHEA:26285"/>
        <dbReference type="ChEBI" id="CHEBI:57856"/>
        <dbReference type="ChEBI" id="CHEBI:59789"/>
        <dbReference type="ChEBI" id="CHEBI:60063"/>
        <dbReference type="ChEBI" id="CHEBI:60064"/>
        <dbReference type="EC" id="2.1.1.195"/>
    </reaction>
</comment>
<comment type="pathway">
    <text evidence="1">Cofactor biosynthesis; adenosylcobalamin biosynthesis; cob(II)yrinate a,c-diamide from sirohydrochlorin (anaerobic route): step 6/10.</text>
</comment>
<comment type="similarity">
    <text evidence="1">Belongs to the CbiD family.</text>
</comment>
<name>CBID_PSEU2</name>